<gene>
    <name evidence="2" type="primary">dcsA</name>
</gene>
<protein>
    <recommendedName>
        <fullName>Putative N(omega)-hydroxy-L-arginine synthase DcsA</fullName>
    </recommendedName>
</protein>
<reference key="1">
    <citation type="journal article" date="2010" name="Antimicrob. Agents Chemother.">
        <title>Molecular cloning and heterologous expression of a biosynthetic gene cluster for the antitubercular agent D-cycloserine produced by Streptomyces lavendulae.</title>
        <authorList>
            <person name="Kumagai T."/>
            <person name="Koyama Y."/>
            <person name="Oda K."/>
            <person name="Noda M."/>
            <person name="Matoba Y."/>
            <person name="Sugiyama M."/>
        </authorList>
    </citation>
    <scope>NUCLEOTIDE SEQUENCE [GENOMIC DNA]</scope>
    <source>
        <strain>ATCC 11924 / 8197-20</strain>
    </source>
</reference>
<reference key="2">
    <citation type="journal article" date="2012" name="Antimicrob. Agents Chemother.">
        <title>Heme protein and hydroxyarginase necessary for biosynthesis of D-cycloserine.</title>
        <authorList>
            <person name="Kumagai T."/>
            <person name="Takagi K."/>
            <person name="Koyama Y."/>
            <person name="Matoba Y."/>
            <person name="Oda K."/>
            <person name="Noda M."/>
            <person name="Sugiyama M."/>
        </authorList>
    </citation>
    <scope>FUNCTION</scope>
    <scope>COFACTOR</scope>
    <scope>DISRUPTION PHENOTYPE</scope>
</reference>
<keyword id="KW-0045">Antibiotic biosynthesis</keyword>
<keyword id="KW-0349">Heme</keyword>
<keyword id="KW-0408">Iron</keyword>
<keyword id="KW-0479">Metal-binding</keyword>
<organism>
    <name type="scientific">Streptomyces lavendulae</name>
    <dbReference type="NCBI Taxonomy" id="1914"/>
    <lineage>
        <taxon>Bacteria</taxon>
        <taxon>Bacillati</taxon>
        <taxon>Actinomycetota</taxon>
        <taxon>Actinomycetes</taxon>
        <taxon>Kitasatosporales</taxon>
        <taxon>Streptomycetaceae</taxon>
        <taxon>Streptomyces</taxon>
    </lineage>
</organism>
<sequence length="265" mass="29723">MNCYPAGHLLGKGHVQLNESGENAELISQEQIGDDLNGWHRDAFEDIASRLTDPGFPCVFSRNAFRKKLVKFVFVEGSGKEDIRHLGAGLKDYVELSRDWDGALDTAYPLVVVFSADAVTADSVEQYHAFGWWVLQELHAIDPTPWPEGVDKGPQSEAWSMCFHGMPLFINMSSPAHQVRRSRNLGRHFALVINPRERFDVFAGDTPSGRKVRSNIRGRIARYDGTPHAQQLGSYGTGALEWMQYGLVEENRERADVCPFTFRGA</sequence>
<dbReference type="EMBL" id="AB516431">
    <property type="protein sequence ID" value="BAI70375.1"/>
    <property type="molecule type" value="Genomic_DNA"/>
</dbReference>
<dbReference type="KEGG" id="ag:BAI70375"/>
<dbReference type="BioCyc" id="MetaCyc:MONOMER-18020"/>
<dbReference type="GO" id="GO:0020037">
    <property type="term" value="F:heme binding"/>
    <property type="evidence" value="ECO:0000314"/>
    <property type="project" value="UniProtKB"/>
</dbReference>
<dbReference type="GO" id="GO:0046872">
    <property type="term" value="F:metal ion binding"/>
    <property type="evidence" value="ECO:0007669"/>
    <property type="project" value="UniProtKB-KW"/>
</dbReference>
<dbReference type="GO" id="GO:0017000">
    <property type="term" value="P:antibiotic biosynthetic process"/>
    <property type="evidence" value="ECO:0000315"/>
    <property type="project" value="UniProtKB"/>
</dbReference>
<dbReference type="InterPro" id="IPR014988">
    <property type="entry name" value="Uncharacterised_YqcI/YcgG"/>
</dbReference>
<dbReference type="PANTHER" id="PTHR40045">
    <property type="entry name" value="YCGG FAMILY PROTEIN"/>
    <property type="match status" value="1"/>
</dbReference>
<dbReference type="PANTHER" id="PTHR40045:SF1">
    <property type="entry name" value="YQCI_YCGG FAMILY PROTEIN"/>
    <property type="match status" value="1"/>
</dbReference>
<dbReference type="Pfam" id="PF08892">
    <property type="entry name" value="YqcI_YcgG"/>
    <property type="match status" value="1"/>
</dbReference>
<feature type="chain" id="PRO_0000424060" description="Putative N(omega)-hydroxy-L-arginine synthase DcsA">
    <location>
        <begin position="1"/>
        <end position="265"/>
    </location>
</feature>
<accession>D2Z024</accession>
<name>DCSA_STRLA</name>
<evidence type="ECO:0000269" key="1">
    <source>
    </source>
</evidence>
<evidence type="ECO:0000303" key="2">
    <source>
    </source>
</evidence>
<evidence type="ECO:0000305" key="3"/>
<proteinExistence type="inferred from homology"/>
<comment type="function">
    <text evidence="1">Involved in the biosynthesis of the antibiotic D-cycloserine (DCS), a cyclic structural analog of D-alanine, used as an antitubercular agent. Could catalyze the production of N(omega)-hydroxy-L-arginine (NHA) from L-arginine.</text>
</comment>
<comment type="cofactor">
    <cofactor evidence="1">
        <name>heme</name>
        <dbReference type="ChEBI" id="CHEBI:30413"/>
    </cofactor>
</comment>
<comment type="disruption phenotype">
    <text evidence="1">Cells lacking this gene do not produce cycloserine (DCS).</text>
</comment>
<comment type="similarity">
    <text evidence="3">Belongs to the DcsA family.</text>
</comment>